<organism>
    <name type="scientific">Rickettsia typhi (strain ATCC VR-144 / Wilmington)</name>
    <dbReference type="NCBI Taxonomy" id="257363"/>
    <lineage>
        <taxon>Bacteria</taxon>
        <taxon>Pseudomonadati</taxon>
        <taxon>Pseudomonadota</taxon>
        <taxon>Alphaproteobacteria</taxon>
        <taxon>Rickettsiales</taxon>
        <taxon>Rickettsiaceae</taxon>
        <taxon>Rickettsieae</taxon>
        <taxon>Rickettsia</taxon>
        <taxon>typhus group</taxon>
    </lineage>
</organism>
<keyword id="KW-0997">Cell inner membrane</keyword>
<keyword id="KW-1003">Cell membrane</keyword>
<keyword id="KW-0963">Cytoplasm</keyword>
<keyword id="KW-0342">GTP-binding</keyword>
<keyword id="KW-0378">Hydrolase</keyword>
<keyword id="KW-0472">Membrane</keyword>
<keyword id="KW-0547">Nucleotide-binding</keyword>
<keyword id="KW-0675">Receptor</keyword>
<comment type="function">
    <text evidence="1">Involved in targeting and insertion of nascent membrane proteins into the cytoplasmic membrane. Acts as a receptor for the complex formed by the signal recognition particle (SRP) and the ribosome-nascent chain (RNC). Interaction with SRP-RNC leads to the transfer of the RNC complex to the Sec translocase for insertion into the membrane, the hydrolysis of GTP by both Ffh and FtsY, and the dissociation of the SRP-FtsY complex into the individual components.</text>
</comment>
<comment type="catalytic activity">
    <reaction evidence="1">
        <text>GTP + H2O = GDP + phosphate + H(+)</text>
        <dbReference type="Rhea" id="RHEA:19669"/>
        <dbReference type="ChEBI" id="CHEBI:15377"/>
        <dbReference type="ChEBI" id="CHEBI:15378"/>
        <dbReference type="ChEBI" id="CHEBI:37565"/>
        <dbReference type="ChEBI" id="CHEBI:43474"/>
        <dbReference type="ChEBI" id="CHEBI:58189"/>
        <dbReference type="EC" id="3.6.5.4"/>
    </reaction>
</comment>
<comment type="subunit">
    <text evidence="1">Part of the signal recognition particle protein translocation system, which is composed of SRP and FtsY. SRP is a ribonucleoprotein composed of Ffh and a 4.5S RNA molecule.</text>
</comment>
<comment type="subcellular location">
    <subcellularLocation>
        <location>Cell inner membrane</location>
        <topology>Peripheral membrane protein</topology>
        <orientation>Cytoplasmic side</orientation>
    </subcellularLocation>
    <subcellularLocation>
        <location evidence="1">Cytoplasm</location>
    </subcellularLocation>
</comment>
<comment type="similarity">
    <text evidence="1">Belongs to the GTP-binding SRP family. FtsY subfamily.</text>
</comment>
<gene>
    <name evidence="1" type="primary">ftsY</name>
    <name type="ordered locus">RT0762</name>
</gene>
<name>FTSY_RICTY</name>
<dbReference type="EC" id="3.6.5.4" evidence="1"/>
<dbReference type="EMBL" id="AE017197">
    <property type="protein sequence ID" value="AAU04218.1"/>
    <property type="molecule type" value="Genomic_DNA"/>
</dbReference>
<dbReference type="RefSeq" id="WP_011191193.1">
    <property type="nucleotide sequence ID" value="NC_006142.1"/>
</dbReference>
<dbReference type="SMR" id="Q68VX4"/>
<dbReference type="KEGG" id="rty:RT0762"/>
<dbReference type="eggNOG" id="COG0552">
    <property type="taxonomic scope" value="Bacteria"/>
</dbReference>
<dbReference type="HOGENOM" id="CLU_009301_3_0_5"/>
<dbReference type="OrthoDB" id="9804720at2"/>
<dbReference type="Proteomes" id="UP000000604">
    <property type="component" value="Chromosome"/>
</dbReference>
<dbReference type="GO" id="GO:0005737">
    <property type="term" value="C:cytoplasm"/>
    <property type="evidence" value="ECO:0007669"/>
    <property type="project" value="UniProtKB-SubCell"/>
</dbReference>
<dbReference type="GO" id="GO:0005886">
    <property type="term" value="C:plasma membrane"/>
    <property type="evidence" value="ECO:0007669"/>
    <property type="project" value="UniProtKB-SubCell"/>
</dbReference>
<dbReference type="GO" id="GO:0016887">
    <property type="term" value="F:ATP hydrolysis activity"/>
    <property type="evidence" value="ECO:0007669"/>
    <property type="project" value="InterPro"/>
</dbReference>
<dbReference type="GO" id="GO:0005525">
    <property type="term" value="F:GTP binding"/>
    <property type="evidence" value="ECO:0007669"/>
    <property type="project" value="UniProtKB-UniRule"/>
</dbReference>
<dbReference type="GO" id="GO:0003924">
    <property type="term" value="F:GTPase activity"/>
    <property type="evidence" value="ECO:0007669"/>
    <property type="project" value="UniProtKB-UniRule"/>
</dbReference>
<dbReference type="GO" id="GO:0005047">
    <property type="term" value="F:signal recognition particle binding"/>
    <property type="evidence" value="ECO:0007669"/>
    <property type="project" value="TreeGrafter"/>
</dbReference>
<dbReference type="GO" id="GO:0006614">
    <property type="term" value="P:SRP-dependent cotranslational protein targeting to membrane"/>
    <property type="evidence" value="ECO:0007669"/>
    <property type="project" value="InterPro"/>
</dbReference>
<dbReference type="CDD" id="cd17874">
    <property type="entry name" value="FtsY"/>
    <property type="match status" value="1"/>
</dbReference>
<dbReference type="FunFam" id="3.40.50.300:FF:000053">
    <property type="entry name" value="Signal recognition particle receptor FtsY"/>
    <property type="match status" value="1"/>
</dbReference>
<dbReference type="Gene3D" id="3.40.50.300">
    <property type="entry name" value="P-loop containing nucleotide triphosphate hydrolases"/>
    <property type="match status" value="1"/>
</dbReference>
<dbReference type="Gene3D" id="1.20.120.140">
    <property type="entry name" value="Signal recognition particle SRP54, nucleotide-binding domain"/>
    <property type="match status" value="1"/>
</dbReference>
<dbReference type="HAMAP" id="MF_00920">
    <property type="entry name" value="FtsY"/>
    <property type="match status" value="1"/>
</dbReference>
<dbReference type="InterPro" id="IPR003593">
    <property type="entry name" value="AAA+_ATPase"/>
</dbReference>
<dbReference type="InterPro" id="IPR027417">
    <property type="entry name" value="P-loop_NTPase"/>
</dbReference>
<dbReference type="InterPro" id="IPR013822">
    <property type="entry name" value="Signal_recog_particl_SRP54_hlx"/>
</dbReference>
<dbReference type="InterPro" id="IPR004390">
    <property type="entry name" value="SR_rcpt_FtsY"/>
</dbReference>
<dbReference type="InterPro" id="IPR036225">
    <property type="entry name" value="SRP/SRP_N"/>
</dbReference>
<dbReference type="InterPro" id="IPR000897">
    <property type="entry name" value="SRP54_GTPase_dom"/>
</dbReference>
<dbReference type="InterPro" id="IPR042101">
    <property type="entry name" value="SRP54_N_sf"/>
</dbReference>
<dbReference type="NCBIfam" id="TIGR00064">
    <property type="entry name" value="ftsY"/>
    <property type="match status" value="1"/>
</dbReference>
<dbReference type="PANTHER" id="PTHR43134">
    <property type="entry name" value="SIGNAL RECOGNITION PARTICLE RECEPTOR SUBUNIT ALPHA"/>
    <property type="match status" value="1"/>
</dbReference>
<dbReference type="PANTHER" id="PTHR43134:SF1">
    <property type="entry name" value="SIGNAL RECOGNITION PARTICLE RECEPTOR SUBUNIT ALPHA"/>
    <property type="match status" value="1"/>
</dbReference>
<dbReference type="Pfam" id="PF00448">
    <property type="entry name" value="SRP54"/>
    <property type="match status" value="1"/>
</dbReference>
<dbReference type="Pfam" id="PF02881">
    <property type="entry name" value="SRP54_N"/>
    <property type="match status" value="1"/>
</dbReference>
<dbReference type="SMART" id="SM00382">
    <property type="entry name" value="AAA"/>
    <property type="match status" value="1"/>
</dbReference>
<dbReference type="SMART" id="SM00962">
    <property type="entry name" value="SRP54"/>
    <property type="match status" value="1"/>
</dbReference>
<dbReference type="SMART" id="SM00963">
    <property type="entry name" value="SRP54_N"/>
    <property type="match status" value="1"/>
</dbReference>
<dbReference type="SUPFAM" id="SSF47364">
    <property type="entry name" value="Domain of the SRP/SRP receptor G-proteins"/>
    <property type="match status" value="1"/>
</dbReference>
<dbReference type="SUPFAM" id="SSF52540">
    <property type="entry name" value="P-loop containing nucleoside triphosphate hydrolases"/>
    <property type="match status" value="1"/>
</dbReference>
<dbReference type="PROSITE" id="PS00300">
    <property type="entry name" value="SRP54"/>
    <property type="match status" value="1"/>
</dbReference>
<feature type="chain" id="PRO_0000286497" description="Signal recognition particle receptor FtsY">
    <location>
        <begin position="1"/>
        <end position="303"/>
    </location>
</feature>
<feature type="binding site" evidence="1">
    <location>
        <begin position="108"/>
        <end position="115"/>
    </location>
    <ligand>
        <name>GTP</name>
        <dbReference type="ChEBI" id="CHEBI:37565"/>
    </ligand>
</feature>
<feature type="binding site" evidence="1">
    <location>
        <begin position="190"/>
        <end position="194"/>
    </location>
    <ligand>
        <name>GTP</name>
        <dbReference type="ChEBI" id="CHEBI:37565"/>
    </ligand>
</feature>
<feature type="binding site" evidence="1">
    <location>
        <begin position="254"/>
        <end position="257"/>
    </location>
    <ligand>
        <name>GTP</name>
        <dbReference type="ChEBI" id="CHEBI:37565"/>
    </ligand>
</feature>
<sequence>MITIFNKLKQSLSKTSNTISTGIDKIFYKKKLDQTTLNELEELLISSDISITVVTHIIEKFKNVKFDKTIDSDTVKEAIAKLIEQQLSKSEIPFTLSENKLNIILICGVNGVGKTTTIGKLSALYSAQGKKVAVAACDTFRAAAINQLSSWVDRANALLITGEVSADPASVAYRAIQESIKQNIDILFIDTAGRLHNNKNLMDELSKIVKVIKKLDENAPTHSILIIDAVTGQNTYNQIEYFNDVTNLTGLIITKLDGSAKAGVLVGAVQKFNLPIYFIGIGEQIEDLKIFNRHDFSRSLVGL</sequence>
<evidence type="ECO:0000255" key="1">
    <source>
        <dbReference type="HAMAP-Rule" id="MF_00920"/>
    </source>
</evidence>
<reference key="1">
    <citation type="journal article" date="2004" name="J. Bacteriol.">
        <title>Complete genome sequence of Rickettsia typhi and comparison with sequences of other Rickettsiae.</title>
        <authorList>
            <person name="McLeod M.P."/>
            <person name="Qin X."/>
            <person name="Karpathy S.E."/>
            <person name="Gioia J."/>
            <person name="Highlander S.K."/>
            <person name="Fox G.E."/>
            <person name="McNeill T.Z."/>
            <person name="Jiang H."/>
            <person name="Muzny D."/>
            <person name="Jacob L.S."/>
            <person name="Hawes A.C."/>
            <person name="Sodergren E."/>
            <person name="Gill R."/>
            <person name="Hume J."/>
            <person name="Morgan M."/>
            <person name="Fan G."/>
            <person name="Amin A.G."/>
            <person name="Gibbs R.A."/>
            <person name="Hong C."/>
            <person name="Yu X.-J."/>
            <person name="Walker D.H."/>
            <person name="Weinstock G.M."/>
        </authorList>
    </citation>
    <scope>NUCLEOTIDE SEQUENCE [LARGE SCALE GENOMIC DNA]</scope>
    <source>
        <strain>ATCC VR-144 / Wilmington</strain>
    </source>
</reference>
<protein>
    <recommendedName>
        <fullName evidence="1">Signal recognition particle receptor FtsY</fullName>
        <shortName evidence="1">SRP receptor</shortName>
        <ecNumber evidence="1">3.6.5.4</ecNumber>
    </recommendedName>
</protein>
<accession>Q68VX4</accession>
<proteinExistence type="inferred from homology"/>